<name>NU4C_PROMP</name>
<keyword id="KW-0472">Membrane</keyword>
<keyword id="KW-0520">NAD</keyword>
<keyword id="KW-0521">NADP</keyword>
<keyword id="KW-0618">Plastoquinone</keyword>
<keyword id="KW-0874">Quinone</keyword>
<keyword id="KW-0793">Thylakoid</keyword>
<keyword id="KW-1278">Translocase</keyword>
<keyword id="KW-0812">Transmembrane</keyword>
<keyword id="KW-1133">Transmembrane helix</keyword>
<comment type="function">
    <text evidence="1">NDH-1 shuttles electrons from NAD(P)H, via FMN and iron-sulfur (Fe-S) centers, to quinones in the respiratory chain. The immediate electron acceptor for the enzyme in this species is believed to be plastoquinone. Couples the redox reaction to proton translocation (for every two electrons transferred, four hydrogen ions are translocated across the cytoplasmic membrane), and thus conserves the redox energy in a proton gradient.</text>
</comment>
<comment type="catalytic activity">
    <reaction evidence="1">
        <text>a plastoquinone + NADH + (n+1) H(+)(in) = a plastoquinol + NAD(+) + n H(+)(out)</text>
        <dbReference type="Rhea" id="RHEA:42608"/>
        <dbReference type="Rhea" id="RHEA-COMP:9561"/>
        <dbReference type="Rhea" id="RHEA-COMP:9562"/>
        <dbReference type="ChEBI" id="CHEBI:15378"/>
        <dbReference type="ChEBI" id="CHEBI:17757"/>
        <dbReference type="ChEBI" id="CHEBI:57540"/>
        <dbReference type="ChEBI" id="CHEBI:57945"/>
        <dbReference type="ChEBI" id="CHEBI:62192"/>
    </reaction>
</comment>
<comment type="catalytic activity">
    <reaction evidence="1">
        <text>a plastoquinone + NADPH + (n+1) H(+)(in) = a plastoquinol + NADP(+) + n H(+)(out)</text>
        <dbReference type="Rhea" id="RHEA:42612"/>
        <dbReference type="Rhea" id="RHEA-COMP:9561"/>
        <dbReference type="Rhea" id="RHEA-COMP:9562"/>
        <dbReference type="ChEBI" id="CHEBI:15378"/>
        <dbReference type="ChEBI" id="CHEBI:17757"/>
        <dbReference type="ChEBI" id="CHEBI:57783"/>
        <dbReference type="ChEBI" id="CHEBI:58349"/>
        <dbReference type="ChEBI" id="CHEBI:62192"/>
    </reaction>
</comment>
<comment type="subcellular location">
    <subcellularLocation>
        <location evidence="1">Cellular thylakoid membrane</location>
        <topology evidence="1">Multi-pass membrane protein</topology>
    </subcellularLocation>
</comment>
<comment type="similarity">
    <text evidence="1">Belongs to the complex I subunit 4 family.</text>
</comment>
<sequence>MSSYFFTHFALHTIGTLGGVIPDFPWLSVSILFPIGCAFLIPFFPDKGEGKEVRWFALSVALITFLVTVGSYINGFDINNEDVQLKESINWLPNLGLTWSVGADGMSMPLILLTSFITALAVLAAWPVKFKPKLFFFLILIMDGGQIAVFAVQDMLLFFLSWELELLPVYLLLAIWGGKNRQYAATKFIIYTAGSSIFILLAALAMGFYGTEVPNFEFSHLANQDFGQNFQILCYIGLLIAFGVKLPIVPLHTWLPDAHGEATAPVHMLLAGILLKMGGYALLRFNAQLLPIAHAQFSPLLIVLGVVNIIYAALTSFAQRNLKRKIAYSSISHMGFVLIGIGSFSSLGTSGAMLQMVSHGLIGASLFFLVGATYDRTKTLKLDEMGGVGQKMRIMFALWTACSLASLALPGMSGFVSELMVFTGFVTDEVYTLPFRVIMASLAAIGVILTPIYLLSMLREIFFGKENPKLTEDKNLIDAEPREIYIIACLLLPIIGIGLYPRLVTESYLATINNLVDRDLNAVKNIPKTNVFAGNKSNQILKAPTI</sequence>
<dbReference type="EC" id="7.1.1.-" evidence="1"/>
<dbReference type="EMBL" id="BX548174">
    <property type="protein sequence ID" value="CAE18609.1"/>
    <property type="molecule type" value="Genomic_DNA"/>
</dbReference>
<dbReference type="RefSeq" id="WP_011131789.1">
    <property type="nucleotide sequence ID" value="NC_005072.1"/>
</dbReference>
<dbReference type="SMR" id="Q7V3C8"/>
<dbReference type="STRING" id="59919.PMM0150"/>
<dbReference type="KEGG" id="pmm:PMM0150"/>
<dbReference type="eggNOG" id="COG1008">
    <property type="taxonomic scope" value="Bacteria"/>
</dbReference>
<dbReference type="HOGENOM" id="CLU_007100_4_0_3"/>
<dbReference type="OrthoDB" id="9811718at2"/>
<dbReference type="Proteomes" id="UP000001026">
    <property type="component" value="Chromosome"/>
</dbReference>
<dbReference type="GO" id="GO:0031676">
    <property type="term" value="C:plasma membrane-derived thylakoid membrane"/>
    <property type="evidence" value="ECO:0007669"/>
    <property type="project" value="UniProtKB-SubCell"/>
</dbReference>
<dbReference type="GO" id="GO:0008137">
    <property type="term" value="F:NADH dehydrogenase (ubiquinone) activity"/>
    <property type="evidence" value="ECO:0007669"/>
    <property type="project" value="InterPro"/>
</dbReference>
<dbReference type="GO" id="GO:0048039">
    <property type="term" value="F:ubiquinone binding"/>
    <property type="evidence" value="ECO:0007669"/>
    <property type="project" value="TreeGrafter"/>
</dbReference>
<dbReference type="GO" id="GO:0042773">
    <property type="term" value="P:ATP synthesis coupled electron transport"/>
    <property type="evidence" value="ECO:0007669"/>
    <property type="project" value="InterPro"/>
</dbReference>
<dbReference type="GO" id="GO:0015990">
    <property type="term" value="P:electron transport coupled proton transport"/>
    <property type="evidence" value="ECO:0007669"/>
    <property type="project" value="TreeGrafter"/>
</dbReference>
<dbReference type="HAMAP" id="MF_00491">
    <property type="entry name" value="NDH1_NuoM"/>
    <property type="match status" value="1"/>
</dbReference>
<dbReference type="InterPro" id="IPR022997">
    <property type="entry name" value="NADH_Q_OxRdtase_chain4"/>
</dbReference>
<dbReference type="InterPro" id="IPR010227">
    <property type="entry name" value="NADH_Q_OxRdtase_chainM/4"/>
</dbReference>
<dbReference type="InterPro" id="IPR003918">
    <property type="entry name" value="NADH_UbQ_OxRdtase"/>
</dbReference>
<dbReference type="InterPro" id="IPR001750">
    <property type="entry name" value="ND/Mrp_TM"/>
</dbReference>
<dbReference type="NCBIfam" id="TIGR01972">
    <property type="entry name" value="NDH_I_M"/>
    <property type="match status" value="1"/>
</dbReference>
<dbReference type="NCBIfam" id="NF002713">
    <property type="entry name" value="PRK02546.1"/>
    <property type="match status" value="1"/>
</dbReference>
<dbReference type="NCBIfam" id="NF009212">
    <property type="entry name" value="PRK12561.1"/>
    <property type="match status" value="1"/>
</dbReference>
<dbReference type="PANTHER" id="PTHR43507:SF21">
    <property type="entry name" value="NAD(P)H-QUINONE OXIDOREDUCTASE CHAIN 4, CHLOROPLASTIC"/>
    <property type="match status" value="1"/>
</dbReference>
<dbReference type="PANTHER" id="PTHR43507">
    <property type="entry name" value="NADH-UBIQUINONE OXIDOREDUCTASE CHAIN 4"/>
    <property type="match status" value="1"/>
</dbReference>
<dbReference type="Pfam" id="PF00361">
    <property type="entry name" value="Proton_antipo_M"/>
    <property type="match status" value="1"/>
</dbReference>
<dbReference type="PRINTS" id="PR01437">
    <property type="entry name" value="NUOXDRDTASE4"/>
</dbReference>
<proteinExistence type="inferred from homology"/>
<feature type="chain" id="PRO_0000343244" description="NAD(P)H-quinone oxidoreductase chain 4">
    <location>
        <begin position="1"/>
        <end position="546"/>
    </location>
</feature>
<feature type="transmembrane region" description="Helical" evidence="1">
    <location>
        <begin position="24"/>
        <end position="44"/>
    </location>
</feature>
<feature type="transmembrane region" description="Helical" evidence="1">
    <location>
        <begin position="56"/>
        <end position="76"/>
    </location>
</feature>
<feature type="transmembrane region" description="Helical" evidence="1">
    <location>
        <begin position="108"/>
        <end position="128"/>
    </location>
</feature>
<feature type="transmembrane region" description="Helical" evidence="1">
    <location>
        <begin position="132"/>
        <end position="152"/>
    </location>
</feature>
<feature type="transmembrane region" description="Helical" evidence="1">
    <location>
        <begin position="156"/>
        <end position="176"/>
    </location>
</feature>
<feature type="transmembrane region" description="Helical" evidence="1">
    <location>
        <begin position="188"/>
        <end position="208"/>
    </location>
</feature>
<feature type="transmembrane region" description="Helical" evidence="1">
    <location>
        <begin position="232"/>
        <end position="252"/>
    </location>
</feature>
<feature type="transmembrane region" description="Helical" evidence="1">
    <location>
        <begin position="263"/>
        <end position="283"/>
    </location>
</feature>
<feature type="transmembrane region" description="Helical" evidence="1">
    <location>
        <begin position="297"/>
        <end position="317"/>
    </location>
</feature>
<feature type="transmembrane region" description="Helical" evidence="1">
    <location>
        <begin position="326"/>
        <end position="346"/>
    </location>
</feature>
<feature type="transmembrane region" description="Helical" evidence="1">
    <location>
        <begin position="352"/>
        <end position="372"/>
    </location>
</feature>
<feature type="transmembrane region" description="Helical" evidence="1">
    <location>
        <begin position="396"/>
        <end position="416"/>
    </location>
</feature>
<feature type="transmembrane region" description="Helical" evidence="1">
    <location>
        <begin position="437"/>
        <end position="457"/>
    </location>
</feature>
<feature type="transmembrane region" description="Helical" evidence="1">
    <location>
        <begin position="484"/>
        <end position="504"/>
    </location>
</feature>
<evidence type="ECO:0000255" key="1">
    <source>
        <dbReference type="HAMAP-Rule" id="MF_00491"/>
    </source>
</evidence>
<reference key="1">
    <citation type="journal article" date="2003" name="Nature">
        <title>Genome divergence in two Prochlorococcus ecotypes reflects oceanic niche differentiation.</title>
        <authorList>
            <person name="Rocap G."/>
            <person name="Larimer F.W."/>
            <person name="Lamerdin J.E."/>
            <person name="Malfatti S."/>
            <person name="Chain P."/>
            <person name="Ahlgren N.A."/>
            <person name="Arellano A."/>
            <person name="Coleman M."/>
            <person name="Hauser L."/>
            <person name="Hess W.R."/>
            <person name="Johnson Z.I."/>
            <person name="Land M.L."/>
            <person name="Lindell D."/>
            <person name="Post A.F."/>
            <person name="Regala W."/>
            <person name="Shah M."/>
            <person name="Shaw S.L."/>
            <person name="Steglich C."/>
            <person name="Sullivan M.B."/>
            <person name="Ting C.S."/>
            <person name="Tolonen A."/>
            <person name="Webb E.A."/>
            <person name="Zinser E.R."/>
            <person name="Chisholm S.W."/>
        </authorList>
    </citation>
    <scope>NUCLEOTIDE SEQUENCE [LARGE SCALE GENOMIC DNA]</scope>
    <source>
        <strain>CCMP1986 / NIES-2087 / MED4</strain>
    </source>
</reference>
<organism>
    <name type="scientific">Prochlorococcus marinus subsp. pastoris (strain CCMP1986 / NIES-2087 / MED4)</name>
    <dbReference type="NCBI Taxonomy" id="59919"/>
    <lineage>
        <taxon>Bacteria</taxon>
        <taxon>Bacillati</taxon>
        <taxon>Cyanobacteriota</taxon>
        <taxon>Cyanophyceae</taxon>
        <taxon>Synechococcales</taxon>
        <taxon>Prochlorococcaceae</taxon>
        <taxon>Prochlorococcus</taxon>
    </lineage>
</organism>
<protein>
    <recommendedName>
        <fullName evidence="1">NAD(P)H-quinone oxidoreductase chain 4</fullName>
        <ecNumber evidence="1">7.1.1.-</ecNumber>
    </recommendedName>
    <alternativeName>
        <fullName evidence="1">NAD(P)H dehydrogenase I, chain 4</fullName>
    </alternativeName>
    <alternativeName>
        <fullName evidence="1">NDH-1, chain 4</fullName>
    </alternativeName>
</protein>
<accession>Q7V3C8</accession>
<gene>
    <name evidence="1" type="primary">ndhD</name>
    <name type="ordered locus">PMM0150</name>
</gene>